<comment type="function">
    <text evidence="1">Catalyzes the reversible conversion of 2-phosphoglycerate (2-PG) into phosphoenolpyruvate (PEP). It is essential for the degradation of carbohydrates via glycolysis.</text>
</comment>
<comment type="catalytic activity">
    <reaction evidence="1">
        <text>(2R)-2-phosphoglycerate = phosphoenolpyruvate + H2O</text>
        <dbReference type="Rhea" id="RHEA:10164"/>
        <dbReference type="ChEBI" id="CHEBI:15377"/>
        <dbReference type="ChEBI" id="CHEBI:58289"/>
        <dbReference type="ChEBI" id="CHEBI:58702"/>
        <dbReference type="EC" id="4.2.1.11"/>
    </reaction>
</comment>
<comment type="cofactor">
    <cofactor evidence="1">
        <name>Mg(2+)</name>
        <dbReference type="ChEBI" id="CHEBI:18420"/>
    </cofactor>
    <text evidence="1">Binds a second Mg(2+) ion via substrate during catalysis.</text>
</comment>
<comment type="pathway">
    <text evidence="1">Carbohydrate degradation; glycolysis; pyruvate from D-glyceraldehyde 3-phosphate: step 4/5.</text>
</comment>
<comment type="subunit">
    <text evidence="1">Component of the RNA degradosome, a multiprotein complex involved in RNA processing and mRNA degradation.</text>
</comment>
<comment type="subcellular location">
    <subcellularLocation>
        <location evidence="1">Cytoplasm</location>
    </subcellularLocation>
    <subcellularLocation>
        <location evidence="1">Secreted</location>
    </subcellularLocation>
    <subcellularLocation>
        <location evidence="1">Cell surface</location>
    </subcellularLocation>
    <text evidence="1">Fractions of enolase are present in both the cytoplasm and on the cell surface.</text>
</comment>
<comment type="similarity">
    <text evidence="1">Belongs to the enolase family.</text>
</comment>
<gene>
    <name evidence="1" type="primary">eno</name>
    <name type="ordered locus">EcSMS35_2917</name>
</gene>
<evidence type="ECO:0000255" key="1">
    <source>
        <dbReference type="HAMAP-Rule" id="MF_00318"/>
    </source>
</evidence>
<protein>
    <recommendedName>
        <fullName evidence="1">Enolase</fullName>
        <ecNumber evidence="1">4.2.1.11</ecNumber>
    </recommendedName>
    <alternativeName>
        <fullName evidence="1">2-phospho-D-glycerate hydro-lyase</fullName>
    </alternativeName>
    <alternativeName>
        <fullName evidence="1">2-phosphoglycerate dehydratase</fullName>
    </alternativeName>
</protein>
<dbReference type="EC" id="4.2.1.11" evidence="1"/>
<dbReference type="EMBL" id="CP000970">
    <property type="protein sequence ID" value="ACB20103.1"/>
    <property type="molecule type" value="Genomic_DNA"/>
</dbReference>
<dbReference type="RefSeq" id="WP_000036723.1">
    <property type="nucleotide sequence ID" value="NC_010498.1"/>
</dbReference>
<dbReference type="SMR" id="B1LQB2"/>
<dbReference type="GeneID" id="93779219"/>
<dbReference type="KEGG" id="ecm:EcSMS35_2917"/>
<dbReference type="HOGENOM" id="CLU_031223_2_1_6"/>
<dbReference type="UniPathway" id="UPA00109">
    <property type="reaction ID" value="UER00187"/>
</dbReference>
<dbReference type="Proteomes" id="UP000007011">
    <property type="component" value="Chromosome"/>
</dbReference>
<dbReference type="GO" id="GO:0009986">
    <property type="term" value="C:cell surface"/>
    <property type="evidence" value="ECO:0007669"/>
    <property type="project" value="UniProtKB-SubCell"/>
</dbReference>
<dbReference type="GO" id="GO:0005576">
    <property type="term" value="C:extracellular region"/>
    <property type="evidence" value="ECO:0007669"/>
    <property type="project" value="UniProtKB-SubCell"/>
</dbReference>
<dbReference type="GO" id="GO:0000015">
    <property type="term" value="C:phosphopyruvate hydratase complex"/>
    <property type="evidence" value="ECO:0007669"/>
    <property type="project" value="InterPro"/>
</dbReference>
<dbReference type="GO" id="GO:0000287">
    <property type="term" value="F:magnesium ion binding"/>
    <property type="evidence" value="ECO:0007669"/>
    <property type="project" value="UniProtKB-UniRule"/>
</dbReference>
<dbReference type="GO" id="GO:0004634">
    <property type="term" value="F:phosphopyruvate hydratase activity"/>
    <property type="evidence" value="ECO:0007669"/>
    <property type="project" value="UniProtKB-UniRule"/>
</dbReference>
<dbReference type="GO" id="GO:0006096">
    <property type="term" value="P:glycolytic process"/>
    <property type="evidence" value="ECO:0007669"/>
    <property type="project" value="UniProtKB-UniRule"/>
</dbReference>
<dbReference type="CDD" id="cd03313">
    <property type="entry name" value="enolase"/>
    <property type="match status" value="1"/>
</dbReference>
<dbReference type="FunFam" id="3.20.20.120:FF:000001">
    <property type="entry name" value="Enolase"/>
    <property type="match status" value="1"/>
</dbReference>
<dbReference type="FunFam" id="3.30.390.10:FF:000001">
    <property type="entry name" value="Enolase"/>
    <property type="match status" value="1"/>
</dbReference>
<dbReference type="Gene3D" id="3.20.20.120">
    <property type="entry name" value="Enolase-like C-terminal domain"/>
    <property type="match status" value="1"/>
</dbReference>
<dbReference type="Gene3D" id="3.30.390.10">
    <property type="entry name" value="Enolase-like, N-terminal domain"/>
    <property type="match status" value="1"/>
</dbReference>
<dbReference type="HAMAP" id="MF_00318">
    <property type="entry name" value="Enolase"/>
    <property type="match status" value="1"/>
</dbReference>
<dbReference type="InterPro" id="IPR000941">
    <property type="entry name" value="Enolase"/>
</dbReference>
<dbReference type="InterPro" id="IPR036849">
    <property type="entry name" value="Enolase-like_C_sf"/>
</dbReference>
<dbReference type="InterPro" id="IPR029017">
    <property type="entry name" value="Enolase-like_N"/>
</dbReference>
<dbReference type="InterPro" id="IPR020810">
    <property type="entry name" value="Enolase_C"/>
</dbReference>
<dbReference type="InterPro" id="IPR020809">
    <property type="entry name" value="Enolase_CS"/>
</dbReference>
<dbReference type="InterPro" id="IPR020811">
    <property type="entry name" value="Enolase_N"/>
</dbReference>
<dbReference type="NCBIfam" id="TIGR01060">
    <property type="entry name" value="eno"/>
    <property type="match status" value="1"/>
</dbReference>
<dbReference type="PANTHER" id="PTHR11902">
    <property type="entry name" value="ENOLASE"/>
    <property type="match status" value="1"/>
</dbReference>
<dbReference type="PANTHER" id="PTHR11902:SF1">
    <property type="entry name" value="ENOLASE"/>
    <property type="match status" value="1"/>
</dbReference>
<dbReference type="Pfam" id="PF00113">
    <property type="entry name" value="Enolase_C"/>
    <property type="match status" value="1"/>
</dbReference>
<dbReference type="Pfam" id="PF03952">
    <property type="entry name" value="Enolase_N"/>
    <property type="match status" value="1"/>
</dbReference>
<dbReference type="PIRSF" id="PIRSF001400">
    <property type="entry name" value="Enolase"/>
    <property type="match status" value="1"/>
</dbReference>
<dbReference type="PRINTS" id="PR00148">
    <property type="entry name" value="ENOLASE"/>
</dbReference>
<dbReference type="SFLD" id="SFLDS00001">
    <property type="entry name" value="Enolase"/>
    <property type="match status" value="1"/>
</dbReference>
<dbReference type="SFLD" id="SFLDF00002">
    <property type="entry name" value="enolase"/>
    <property type="match status" value="1"/>
</dbReference>
<dbReference type="SMART" id="SM01192">
    <property type="entry name" value="Enolase_C"/>
    <property type="match status" value="1"/>
</dbReference>
<dbReference type="SMART" id="SM01193">
    <property type="entry name" value="Enolase_N"/>
    <property type="match status" value="1"/>
</dbReference>
<dbReference type="SUPFAM" id="SSF51604">
    <property type="entry name" value="Enolase C-terminal domain-like"/>
    <property type="match status" value="1"/>
</dbReference>
<dbReference type="SUPFAM" id="SSF54826">
    <property type="entry name" value="Enolase N-terminal domain-like"/>
    <property type="match status" value="1"/>
</dbReference>
<dbReference type="PROSITE" id="PS00164">
    <property type="entry name" value="ENOLASE"/>
    <property type="match status" value="1"/>
</dbReference>
<name>ENO_ECOSM</name>
<keyword id="KW-0963">Cytoplasm</keyword>
<keyword id="KW-0324">Glycolysis</keyword>
<keyword id="KW-0456">Lyase</keyword>
<keyword id="KW-0460">Magnesium</keyword>
<keyword id="KW-0479">Metal-binding</keyword>
<keyword id="KW-0964">Secreted</keyword>
<sequence>MSKIVKIIGREIIDSRGNPTVEAEVHLEGGFVGMAAAPSGASTGSREALELRDGDKSRFLGKGVTKAVAAVNGPIAQALIGKDAKDQAGIDKIMIDLDGTENKSKFGANAILAVSLANAKAAAAAKGMPLYEHIAELNGTPGKYSMPVPMMNIINGGEHADNNVDIQEFMIQPVGAKTVKEAIRMGSEVFHHLAKVLKAKGMNTAVGDEGGYAPNLGSNAEALAVIAEAVKAAGYELGKDITLAMDCAASEFYKDGKYVLAGEGNKAFTSEEFTHFLEELTKQYPIVSIEDGLDESDWDGFAYQTKVLGDKIQLVGDDLFVTNTKILKEGIEKGIANSILIKFNQIGSLTETLAAIKMAKDAGYTAVISHRSGETEDATIADLAVGTAAGQIKTGSMSRSDRVAKYNQLIRIEEALGEKAPYNGRKEIKGQA</sequence>
<proteinExistence type="inferred from homology"/>
<reference key="1">
    <citation type="journal article" date="2008" name="J. Bacteriol.">
        <title>Insights into the environmental resistance gene pool from the genome sequence of the multidrug-resistant environmental isolate Escherichia coli SMS-3-5.</title>
        <authorList>
            <person name="Fricke W.F."/>
            <person name="Wright M.S."/>
            <person name="Lindell A.H."/>
            <person name="Harkins D.M."/>
            <person name="Baker-Austin C."/>
            <person name="Ravel J."/>
            <person name="Stepanauskas R."/>
        </authorList>
    </citation>
    <scope>NUCLEOTIDE SEQUENCE [LARGE SCALE GENOMIC DNA]</scope>
    <source>
        <strain>SMS-3-5 / SECEC</strain>
    </source>
</reference>
<feature type="chain" id="PRO_1000119576" description="Enolase">
    <location>
        <begin position="1"/>
        <end position="432"/>
    </location>
</feature>
<feature type="active site" description="Proton donor" evidence="1">
    <location>
        <position position="209"/>
    </location>
</feature>
<feature type="active site" description="Proton acceptor" evidence="1">
    <location>
        <position position="342"/>
    </location>
</feature>
<feature type="binding site" evidence="1">
    <location>
        <position position="167"/>
    </location>
    <ligand>
        <name>(2R)-2-phosphoglycerate</name>
        <dbReference type="ChEBI" id="CHEBI:58289"/>
    </ligand>
</feature>
<feature type="binding site" evidence="1">
    <location>
        <position position="246"/>
    </location>
    <ligand>
        <name>Mg(2+)</name>
        <dbReference type="ChEBI" id="CHEBI:18420"/>
    </ligand>
</feature>
<feature type="binding site" evidence="1">
    <location>
        <position position="290"/>
    </location>
    <ligand>
        <name>Mg(2+)</name>
        <dbReference type="ChEBI" id="CHEBI:18420"/>
    </ligand>
</feature>
<feature type="binding site" evidence="1">
    <location>
        <position position="317"/>
    </location>
    <ligand>
        <name>Mg(2+)</name>
        <dbReference type="ChEBI" id="CHEBI:18420"/>
    </ligand>
</feature>
<feature type="binding site" evidence="1">
    <location>
        <position position="342"/>
    </location>
    <ligand>
        <name>(2R)-2-phosphoglycerate</name>
        <dbReference type="ChEBI" id="CHEBI:58289"/>
    </ligand>
</feature>
<feature type="binding site" evidence="1">
    <location>
        <position position="371"/>
    </location>
    <ligand>
        <name>(2R)-2-phosphoglycerate</name>
        <dbReference type="ChEBI" id="CHEBI:58289"/>
    </ligand>
</feature>
<feature type="binding site" evidence="1">
    <location>
        <position position="372"/>
    </location>
    <ligand>
        <name>(2R)-2-phosphoglycerate</name>
        <dbReference type="ChEBI" id="CHEBI:58289"/>
    </ligand>
</feature>
<feature type="binding site" evidence="1">
    <location>
        <position position="393"/>
    </location>
    <ligand>
        <name>(2R)-2-phosphoglycerate</name>
        <dbReference type="ChEBI" id="CHEBI:58289"/>
    </ligand>
</feature>
<organism>
    <name type="scientific">Escherichia coli (strain SMS-3-5 / SECEC)</name>
    <dbReference type="NCBI Taxonomy" id="439855"/>
    <lineage>
        <taxon>Bacteria</taxon>
        <taxon>Pseudomonadati</taxon>
        <taxon>Pseudomonadota</taxon>
        <taxon>Gammaproteobacteria</taxon>
        <taxon>Enterobacterales</taxon>
        <taxon>Enterobacteriaceae</taxon>
        <taxon>Escherichia</taxon>
    </lineage>
</organism>
<accession>B1LQB2</accession>